<name>RS15A_DROME</name>
<sequence length="130" mass="14771">MVRMNVLADALKCINNAEKRGKRQVLLRPCSKVIIKFLTVMMKHGYIGEFEIVDDHRSGKIVVNLTGRLNKCGVISPRFDVPINDIEKWTNNLLPSRQFGYVVLTTSGGIMDHEEARRKHLGGKILGFFF</sequence>
<gene>
    <name type="primary">RpS15Aa</name>
    <name type="synonym">RpS15A</name>
    <name type="ORF">CG2033</name>
</gene>
<keyword id="KW-0002">3D-structure</keyword>
<keyword id="KW-1185">Reference proteome</keyword>
<keyword id="KW-0687">Ribonucleoprotein</keyword>
<keyword id="KW-0689">Ribosomal protein</keyword>
<organism>
    <name type="scientific">Drosophila melanogaster</name>
    <name type="common">Fruit fly</name>
    <dbReference type="NCBI Taxonomy" id="7227"/>
    <lineage>
        <taxon>Eukaryota</taxon>
        <taxon>Metazoa</taxon>
        <taxon>Ecdysozoa</taxon>
        <taxon>Arthropoda</taxon>
        <taxon>Hexapoda</taxon>
        <taxon>Insecta</taxon>
        <taxon>Pterygota</taxon>
        <taxon>Neoptera</taxon>
        <taxon>Endopterygota</taxon>
        <taxon>Diptera</taxon>
        <taxon>Brachycera</taxon>
        <taxon>Muscomorpha</taxon>
        <taxon>Ephydroidea</taxon>
        <taxon>Drosophilidae</taxon>
        <taxon>Drosophila</taxon>
        <taxon>Sophophora</taxon>
    </lineage>
</organism>
<comment type="similarity">
    <text evidence="2">Belongs to the universal ribosomal protein uS8 family.</text>
</comment>
<reference key="1">
    <citation type="journal article" date="1994" name="J. Biol. Chem.">
        <title>Suppression of a temperature-sensitive cdc33 mutation of yeast by a multicopy plasmid expressing a Drosophila ribosomal protein.</title>
        <authorList>
            <person name="Lavoie C."/>
            <person name="Tam R."/>
            <person name="Clark M."/>
            <person name="Lee H."/>
            <person name="Sonenberg N."/>
            <person name="Lasko P."/>
        </authorList>
    </citation>
    <scope>NUCLEOTIDE SEQUENCE [MRNA]</scope>
    <source>
        <strain>Oregon-R</strain>
    </source>
</reference>
<reference key="2">
    <citation type="journal article" date="2000" name="Science">
        <title>The genome sequence of Drosophila melanogaster.</title>
        <authorList>
            <person name="Adams M.D."/>
            <person name="Celniker S.E."/>
            <person name="Holt R.A."/>
            <person name="Evans C.A."/>
            <person name="Gocayne J.D."/>
            <person name="Amanatides P.G."/>
            <person name="Scherer S.E."/>
            <person name="Li P.W."/>
            <person name="Hoskins R.A."/>
            <person name="Galle R.F."/>
            <person name="George R.A."/>
            <person name="Lewis S.E."/>
            <person name="Richards S."/>
            <person name="Ashburner M."/>
            <person name="Henderson S.N."/>
            <person name="Sutton G.G."/>
            <person name="Wortman J.R."/>
            <person name="Yandell M.D."/>
            <person name="Zhang Q."/>
            <person name="Chen L.X."/>
            <person name="Brandon R.C."/>
            <person name="Rogers Y.-H.C."/>
            <person name="Blazej R.G."/>
            <person name="Champe M."/>
            <person name="Pfeiffer B.D."/>
            <person name="Wan K.H."/>
            <person name="Doyle C."/>
            <person name="Baxter E.G."/>
            <person name="Helt G."/>
            <person name="Nelson C.R."/>
            <person name="Miklos G.L.G."/>
            <person name="Abril J.F."/>
            <person name="Agbayani A."/>
            <person name="An H.-J."/>
            <person name="Andrews-Pfannkoch C."/>
            <person name="Baldwin D."/>
            <person name="Ballew R.M."/>
            <person name="Basu A."/>
            <person name="Baxendale J."/>
            <person name="Bayraktaroglu L."/>
            <person name="Beasley E.M."/>
            <person name="Beeson K.Y."/>
            <person name="Benos P.V."/>
            <person name="Berman B.P."/>
            <person name="Bhandari D."/>
            <person name="Bolshakov S."/>
            <person name="Borkova D."/>
            <person name="Botchan M.R."/>
            <person name="Bouck J."/>
            <person name="Brokstein P."/>
            <person name="Brottier P."/>
            <person name="Burtis K.C."/>
            <person name="Busam D.A."/>
            <person name="Butler H."/>
            <person name="Cadieu E."/>
            <person name="Center A."/>
            <person name="Chandra I."/>
            <person name="Cherry J.M."/>
            <person name="Cawley S."/>
            <person name="Dahlke C."/>
            <person name="Davenport L.B."/>
            <person name="Davies P."/>
            <person name="de Pablos B."/>
            <person name="Delcher A."/>
            <person name="Deng Z."/>
            <person name="Mays A.D."/>
            <person name="Dew I."/>
            <person name="Dietz S.M."/>
            <person name="Dodson K."/>
            <person name="Doup L.E."/>
            <person name="Downes M."/>
            <person name="Dugan-Rocha S."/>
            <person name="Dunkov B.C."/>
            <person name="Dunn P."/>
            <person name="Durbin K.J."/>
            <person name="Evangelista C.C."/>
            <person name="Ferraz C."/>
            <person name="Ferriera S."/>
            <person name="Fleischmann W."/>
            <person name="Fosler C."/>
            <person name="Gabrielian A.E."/>
            <person name="Garg N.S."/>
            <person name="Gelbart W.M."/>
            <person name="Glasser K."/>
            <person name="Glodek A."/>
            <person name="Gong F."/>
            <person name="Gorrell J.H."/>
            <person name="Gu Z."/>
            <person name="Guan P."/>
            <person name="Harris M."/>
            <person name="Harris N.L."/>
            <person name="Harvey D.A."/>
            <person name="Heiman T.J."/>
            <person name="Hernandez J.R."/>
            <person name="Houck J."/>
            <person name="Hostin D."/>
            <person name="Houston K.A."/>
            <person name="Howland T.J."/>
            <person name="Wei M.-H."/>
            <person name="Ibegwam C."/>
            <person name="Jalali M."/>
            <person name="Kalush F."/>
            <person name="Karpen G.H."/>
            <person name="Ke Z."/>
            <person name="Kennison J.A."/>
            <person name="Ketchum K.A."/>
            <person name="Kimmel B.E."/>
            <person name="Kodira C.D."/>
            <person name="Kraft C.L."/>
            <person name="Kravitz S."/>
            <person name="Kulp D."/>
            <person name="Lai Z."/>
            <person name="Lasko P."/>
            <person name="Lei Y."/>
            <person name="Levitsky A.A."/>
            <person name="Li J.H."/>
            <person name="Li Z."/>
            <person name="Liang Y."/>
            <person name="Lin X."/>
            <person name="Liu X."/>
            <person name="Mattei B."/>
            <person name="McIntosh T.C."/>
            <person name="McLeod M.P."/>
            <person name="McPherson D."/>
            <person name="Merkulov G."/>
            <person name="Milshina N.V."/>
            <person name="Mobarry C."/>
            <person name="Morris J."/>
            <person name="Moshrefi A."/>
            <person name="Mount S.M."/>
            <person name="Moy M."/>
            <person name="Murphy B."/>
            <person name="Murphy L."/>
            <person name="Muzny D.M."/>
            <person name="Nelson D.L."/>
            <person name="Nelson D.R."/>
            <person name="Nelson K.A."/>
            <person name="Nixon K."/>
            <person name="Nusskern D.R."/>
            <person name="Pacleb J.M."/>
            <person name="Palazzolo M."/>
            <person name="Pittman G.S."/>
            <person name="Pan S."/>
            <person name="Pollard J."/>
            <person name="Puri V."/>
            <person name="Reese M.G."/>
            <person name="Reinert K."/>
            <person name="Remington K."/>
            <person name="Saunders R.D.C."/>
            <person name="Scheeler F."/>
            <person name="Shen H."/>
            <person name="Shue B.C."/>
            <person name="Siden-Kiamos I."/>
            <person name="Simpson M."/>
            <person name="Skupski M.P."/>
            <person name="Smith T.J."/>
            <person name="Spier E."/>
            <person name="Spradling A.C."/>
            <person name="Stapleton M."/>
            <person name="Strong R."/>
            <person name="Sun E."/>
            <person name="Svirskas R."/>
            <person name="Tector C."/>
            <person name="Turner R."/>
            <person name="Venter E."/>
            <person name="Wang A.H."/>
            <person name="Wang X."/>
            <person name="Wang Z.-Y."/>
            <person name="Wassarman D.A."/>
            <person name="Weinstock G.M."/>
            <person name="Weissenbach J."/>
            <person name="Williams S.M."/>
            <person name="Woodage T."/>
            <person name="Worley K.C."/>
            <person name="Wu D."/>
            <person name="Yang S."/>
            <person name="Yao Q.A."/>
            <person name="Ye J."/>
            <person name="Yeh R.-F."/>
            <person name="Zaveri J.S."/>
            <person name="Zhan M."/>
            <person name="Zhang G."/>
            <person name="Zhao Q."/>
            <person name="Zheng L."/>
            <person name="Zheng X.H."/>
            <person name="Zhong F.N."/>
            <person name="Zhong W."/>
            <person name="Zhou X."/>
            <person name="Zhu S.C."/>
            <person name="Zhu X."/>
            <person name="Smith H.O."/>
            <person name="Gibbs R.A."/>
            <person name="Myers E.W."/>
            <person name="Rubin G.M."/>
            <person name="Venter J.C."/>
        </authorList>
    </citation>
    <scope>NUCLEOTIDE SEQUENCE [LARGE SCALE GENOMIC DNA]</scope>
    <source>
        <strain>Berkeley</strain>
    </source>
</reference>
<reference key="3">
    <citation type="journal article" date="2002" name="Genome Biol.">
        <title>Annotation of the Drosophila melanogaster euchromatic genome: a systematic review.</title>
        <authorList>
            <person name="Misra S."/>
            <person name="Crosby M.A."/>
            <person name="Mungall C.J."/>
            <person name="Matthews B.B."/>
            <person name="Campbell K.S."/>
            <person name="Hradecky P."/>
            <person name="Huang Y."/>
            <person name="Kaminker J.S."/>
            <person name="Millburn G.H."/>
            <person name="Prochnik S.E."/>
            <person name="Smith C.D."/>
            <person name="Tupy J.L."/>
            <person name="Whitfield E.J."/>
            <person name="Bayraktaroglu L."/>
            <person name="Berman B.P."/>
            <person name="Bettencourt B.R."/>
            <person name="Celniker S.E."/>
            <person name="de Grey A.D.N.J."/>
            <person name="Drysdale R.A."/>
            <person name="Harris N.L."/>
            <person name="Richter J."/>
            <person name="Russo S."/>
            <person name="Schroeder A.J."/>
            <person name="Shu S.Q."/>
            <person name="Stapleton M."/>
            <person name="Yamada C."/>
            <person name="Ashburner M."/>
            <person name="Gelbart W.M."/>
            <person name="Rubin G.M."/>
            <person name="Lewis S.E."/>
        </authorList>
    </citation>
    <scope>GENOME REANNOTATION</scope>
    <source>
        <strain>Berkeley</strain>
    </source>
</reference>
<reference key="4">
    <citation type="journal article" date="2002" name="Genome Biol.">
        <title>A Drosophila full-length cDNA resource.</title>
        <authorList>
            <person name="Stapleton M."/>
            <person name="Carlson J.W."/>
            <person name="Brokstein P."/>
            <person name="Yu C."/>
            <person name="Champe M."/>
            <person name="George R.A."/>
            <person name="Guarin H."/>
            <person name="Kronmiller B."/>
            <person name="Pacleb J.M."/>
            <person name="Park S."/>
            <person name="Wan K.H."/>
            <person name="Rubin G.M."/>
            <person name="Celniker S.E."/>
        </authorList>
    </citation>
    <scope>NUCLEOTIDE SEQUENCE [LARGE SCALE MRNA]</scope>
    <source>
        <strain>Berkeley</strain>
        <tissue>Embryo</tissue>
    </source>
</reference>
<reference key="5">
    <citation type="journal article" date="2013" name="Nature">
        <title>Structures of the human and Drosophila 80S ribosome.</title>
        <authorList>
            <person name="Anger A.M."/>
            <person name="Armache J.P."/>
            <person name="Berninghausen O."/>
            <person name="Habeck M."/>
            <person name="Subklewe M."/>
            <person name="Wilson D.N."/>
            <person name="Beckmann R."/>
        </authorList>
    </citation>
    <scope>STRUCTURE BY ELECTRON MICROSCOPY (6.0 ANGSTROMS) OF THE 80S RIBOSOME</scope>
</reference>
<dbReference type="EMBL" id="Z21673">
    <property type="protein sequence ID" value="CAA79771.1"/>
    <property type="molecule type" value="mRNA"/>
</dbReference>
<dbReference type="EMBL" id="AE014298">
    <property type="protein sequence ID" value="AAF48256.1"/>
    <property type="molecule type" value="Genomic_DNA"/>
</dbReference>
<dbReference type="EMBL" id="AE014298">
    <property type="protein sequence ID" value="AAF48257.1"/>
    <property type="molecule type" value="Genomic_DNA"/>
</dbReference>
<dbReference type="EMBL" id="AE014298">
    <property type="protein sequence ID" value="AAN09322.1"/>
    <property type="molecule type" value="Genomic_DNA"/>
</dbReference>
<dbReference type="EMBL" id="AE014298">
    <property type="protein sequence ID" value="AAN09323.1"/>
    <property type="molecule type" value="Genomic_DNA"/>
</dbReference>
<dbReference type="EMBL" id="AY084182">
    <property type="protein sequence ID" value="AAL89920.1"/>
    <property type="molecule type" value="mRNA"/>
</dbReference>
<dbReference type="PIR" id="S33498">
    <property type="entry name" value="S33498"/>
</dbReference>
<dbReference type="RefSeq" id="NP_001162738.1">
    <property type="nucleotide sequence ID" value="NM_001169267.2"/>
</dbReference>
<dbReference type="RefSeq" id="NP_524709.1">
    <property type="nucleotide sequence ID" value="NM_079970.6"/>
</dbReference>
<dbReference type="RefSeq" id="NP_727690.1">
    <property type="nucleotide sequence ID" value="NM_167360.3"/>
</dbReference>
<dbReference type="RefSeq" id="NP_727692.1">
    <property type="nucleotide sequence ID" value="NM_167362.3"/>
</dbReference>
<dbReference type="RefSeq" id="NP_727693.1">
    <property type="nucleotide sequence ID" value="NM_167363.3"/>
</dbReference>
<dbReference type="PDB" id="4V6W">
    <property type="method" value="EM"/>
    <property type="resolution" value="6.00 A"/>
    <property type="chains" value="AW=1-130"/>
</dbReference>
<dbReference type="PDB" id="6XU6">
    <property type="method" value="EM"/>
    <property type="resolution" value="3.50 A"/>
    <property type="chains" value="AW=2-130"/>
</dbReference>
<dbReference type="PDB" id="6XU7">
    <property type="method" value="EM"/>
    <property type="resolution" value="4.90 A"/>
    <property type="chains" value="AW=2-130"/>
</dbReference>
<dbReference type="PDB" id="6XU8">
    <property type="method" value="EM"/>
    <property type="resolution" value="3.00 A"/>
    <property type="chains" value="AW=2-130"/>
</dbReference>
<dbReference type="PDBsum" id="4V6W"/>
<dbReference type="PDBsum" id="6XU6"/>
<dbReference type="PDBsum" id="6XU7"/>
<dbReference type="PDBsum" id="6XU8"/>
<dbReference type="EMDB" id="EMD-10622"/>
<dbReference type="EMDB" id="EMD-10623"/>
<dbReference type="EMDB" id="EMD-10624"/>
<dbReference type="SMR" id="P48149"/>
<dbReference type="BioGRID" id="68867">
    <property type="interactions" value="112"/>
</dbReference>
<dbReference type="DIP" id="DIP-17180N"/>
<dbReference type="FunCoup" id="P48149">
    <property type="interactions" value="1384"/>
</dbReference>
<dbReference type="IntAct" id="P48149">
    <property type="interactions" value="8"/>
</dbReference>
<dbReference type="STRING" id="7227.FBpp0073625"/>
<dbReference type="PaxDb" id="7227-FBpp0073623"/>
<dbReference type="DNASU" id="44150"/>
<dbReference type="EnsemblMetazoa" id="FBtr0073792">
    <property type="protein sequence ID" value="FBpp0073623"/>
    <property type="gene ID" value="FBgn0010198"/>
</dbReference>
<dbReference type="EnsemblMetazoa" id="FBtr0073793">
    <property type="protein sequence ID" value="FBpp0073624"/>
    <property type="gene ID" value="FBgn0010198"/>
</dbReference>
<dbReference type="EnsemblMetazoa" id="FBtr0073794">
    <property type="protein sequence ID" value="FBpp0073625"/>
    <property type="gene ID" value="FBgn0010198"/>
</dbReference>
<dbReference type="EnsemblMetazoa" id="FBtr0073795">
    <property type="protein sequence ID" value="FBpp0073626"/>
    <property type="gene ID" value="FBgn0010198"/>
</dbReference>
<dbReference type="EnsemblMetazoa" id="FBtr0300828">
    <property type="protein sequence ID" value="FBpp0290052"/>
    <property type="gene ID" value="FBgn0010198"/>
</dbReference>
<dbReference type="GeneID" id="44150"/>
<dbReference type="KEGG" id="dme:Dmel_CG2033"/>
<dbReference type="AGR" id="FB:FBgn0010198"/>
<dbReference type="CTD" id="44150"/>
<dbReference type="FlyBase" id="FBgn0010198">
    <property type="gene designation" value="RpS15Aa"/>
</dbReference>
<dbReference type="VEuPathDB" id="VectorBase:FBgn0010198"/>
<dbReference type="eggNOG" id="KOG1754">
    <property type="taxonomic scope" value="Eukaryota"/>
</dbReference>
<dbReference type="GeneTree" id="ENSGT00950000183198"/>
<dbReference type="HOGENOM" id="CLU_098428_1_1_1"/>
<dbReference type="InParanoid" id="P48149"/>
<dbReference type="OMA" id="LPAKNFG"/>
<dbReference type="OrthoDB" id="10250260at2759"/>
<dbReference type="PhylomeDB" id="P48149"/>
<dbReference type="Reactome" id="R-DME-156827">
    <property type="pathway name" value="L13a-mediated translational silencing of Ceruloplasmin expression"/>
</dbReference>
<dbReference type="Reactome" id="R-DME-1799339">
    <property type="pathway name" value="SRP-dependent cotranslational protein targeting to membrane"/>
</dbReference>
<dbReference type="Reactome" id="R-DME-72649">
    <property type="pathway name" value="Translation initiation complex formation"/>
</dbReference>
<dbReference type="Reactome" id="R-DME-72689">
    <property type="pathway name" value="Formation of a pool of free 40S subunits"/>
</dbReference>
<dbReference type="Reactome" id="R-DME-72695">
    <property type="pathway name" value="Formation of the ternary complex, and subsequently, the 43S complex"/>
</dbReference>
<dbReference type="Reactome" id="R-DME-72702">
    <property type="pathway name" value="Ribosomal scanning and start codon recognition"/>
</dbReference>
<dbReference type="Reactome" id="R-DME-72706">
    <property type="pathway name" value="GTP hydrolysis and joining of the 60S ribosomal subunit"/>
</dbReference>
<dbReference type="Reactome" id="R-DME-975956">
    <property type="pathway name" value="Nonsense Mediated Decay (NMD) independent of the Exon Junction Complex (EJC)"/>
</dbReference>
<dbReference type="Reactome" id="R-DME-975957">
    <property type="pathway name" value="Nonsense Mediated Decay (NMD) enhanced by the Exon Junction Complex (EJC)"/>
</dbReference>
<dbReference type="SignaLink" id="P48149"/>
<dbReference type="BioGRID-ORCS" id="44150">
    <property type="hits" value="1 hit in 1 CRISPR screen"/>
</dbReference>
<dbReference type="GenomeRNAi" id="44150"/>
<dbReference type="PRO" id="PR:P48149"/>
<dbReference type="Proteomes" id="UP000000803">
    <property type="component" value="Chromosome X"/>
</dbReference>
<dbReference type="Bgee" id="FBgn0010198">
    <property type="expression patterns" value="Expressed in adult anterior midgut class I enteroendocrine cell in adult midgut (Drosophila) and 274 other cell types or tissues"/>
</dbReference>
<dbReference type="ExpressionAtlas" id="P48149">
    <property type="expression patterns" value="baseline and differential"/>
</dbReference>
<dbReference type="GO" id="GO:0022626">
    <property type="term" value="C:cytosolic ribosome"/>
    <property type="evidence" value="ECO:0000314"/>
    <property type="project" value="FlyBase"/>
</dbReference>
<dbReference type="GO" id="GO:0022627">
    <property type="term" value="C:cytosolic small ribosomal subunit"/>
    <property type="evidence" value="ECO:0000318"/>
    <property type="project" value="GO_Central"/>
</dbReference>
<dbReference type="GO" id="GO:0003735">
    <property type="term" value="F:structural constituent of ribosome"/>
    <property type="evidence" value="ECO:0000314"/>
    <property type="project" value="FlyBase"/>
</dbReference>
<dbReference type="GO" id="GO:0002181">
    <property type="term" value="P:cytoplasmic translation"/>
    <property type="evidence" value="ECO:0000304"/>
    <property type="project" value="FlyBase"/>
</dbReference>
<dbReference type="FunFam" id="3.30.1370.30:FF:000001">
    <property type="entry name" value="40S ribosomal protein S15a"/>
    <property type="match status" value="1"/>
</dbReference>
<dbReference type="FunFam" id="3.30.1490.10:FF:000002">
    <property type="entry name" value="40S ribosomal protein S15a"/>
    <property type="match status" value="1"/>
</dbReference>
<dbReference type="Gene3D" id="3.30.1370.30">
    <property type="match status" value="1"/>
</dbReference>
<dbReference type="Gene3D" id="3.30.1490.10">
    <property type="match status" value="1"/>
</dbReference>
<dbReference type="InterPro" id="IPR000630">
    <property type="entry name" value="Ribosomal_uS8"/>
</dbReference>
<dbReference type="InterPro" id="IPR047863">
    <property type="entry name" value="Ribosomal_uS8_CS"/>
</dbReference>
<dbReference type="InterPro" id="IPR035987">
    <property type="entry name" value="Ribosomal_uS8_sf"/>
</dbReference>
<dbReference type="NCBIfam" id="NF003115">
    <property type="entry name" value="PRK04034.1"/>
    <property type="match status" value="1"/>
</dbReference>
<dbReference type="PANTHER" id="PTHR11758">
    <property type="entry name" value="40S RIBOSOMAL PROTEIN S15A"/>
    <property type="match status" value="1"/>
</dbReference>
<dbReference type="Pfam" id="PF00410">
    <property type="entry name" value="Ribosomal_S8"/>
    <property type="match status" value="1"/>
</dbReference>
<dbReference type="SUPFAM" id="SSF56047">
    <property type="entry name" value="Ribosomal protein S8"/>
    <property type="match status" value="1"/>
</dbReference>
<dbReference type="PROSITE" id="PS00053">
    <property type="entry name" value="RIBOSOMAL_S8"/>
    <property type="match status" value="1"/>
</dbReference>
<accession>P48149</accession>
<accession>A4V4D9</accession>
<accession>Q9VYE4</accession>
<protein>
    <recommendedName>
        <fullName evidence="2">Small ribosomal subunit protein uS8A</fullName>
    </recommendedName>
    <alternativeName>
        <fullName>40S ribosomal protein S15Aa</fullName>
    </alternativeName>
</protein>
<proteinExistence type="evidence at protein level"/>
<evidence type="ECO:0000250" key="1"/>
<evidence type="ECO:0000305" key="2"/>
<feature type="initiator methionine" description="Removed" evidence="1">
    <location>
        <position position="1"/>
    </location>
</feature>
<feature type="chain" id="PRO_0000126609" description="Small ribosomal subunit protein uS8A">
    <location>
        <begin position="2"/>
        <end position="130"/>
    </location>
</feature>